<dbReference type="EMBL" id="M31328">
    <property type="protein sequence ID" value="AAA52582.1"/>
    <property type="molecule type" value="mRNA"/>
</dbReference>
<dbReference type="EMBL" id="U47924">
    <property type="protein sequence ID" value="AAB51313.1"/>
    <property type="molecule type" value="Genomic_DNA"/>
</dbReference>
<dbReference type="EMBL" id="U47930">
    <property type="protein sequence ID" value="AAC50468.1"/>
    <property type="molecule type" value="mRNA"/>
</dbReference>
<dbReference type="EMBL" id="Y12050">
    <property type="protein sequence ID" value="CAA72779.1"/>
    <property type="molecule type" value="Genomic_DNA"/>
</dbReference>
<dbReference type="EMBL" id="Y12051">
    <property type="protein sequence ID" value="CAA72779.1"/>
    <property type="status" value="JOINED"/>
    <property type="molecule type" value="Genomic_DNA"/>
</dbReference>
<dbReference type="EMBL" id="Y12052">
    <property type="protein sequence ID" value="CAA72779.1"/>
    <property type="status" value="JOINED"/>
    <property type="molecule type" value="Genomic_DNA"/>
</dbReference>
<dbReference type="EMBL" id="Y12053">
    <property type="protein sequence ID" value="CAA72779.1"/>
    <property type="status" value="JOINED"/>
    <property type="molecule type" value="Genomic_DNA"/>
</dbReference>
<dbReference type="EMBL" id="Y12054">
    <property type="protein sequence ID" value="CAA72779.1"/>
    <property type="status" value="JOINED"/>
    <property type="molecule type" value="Genomic_DNA"/>
</dbReference>
<dbReference type="EMBL" id="Y12055">
    <property type="protein sequence ID" value="CAA72779.1"/>
    <property type="status" value="JOINED"/>
    <property type="molecule type" value="Genomic_DNA"/>
</dbReference>
<dbReference type="EMBL" id="Y12056">
    <property type="protein sequence ID" value="CAA72779.1"/>
    <property type="status" value="JOINED"/>
    <property type="molecule type" value="Genomic_DNA"/>
</dbReference>
<dbReference type="EMBL" id="Y12057">
    <property type="protein sequence ID" value="CAA72779.1"/>
    <property type="status" value="JOINED"/>
    <property type="molecule type" value="Genomic_DNA"/>
</dbReference>
<dbReference type="EMBL" id="Y12058">
    <property type="protein sequence ID" value="CAA72779.1"/>
    <property type="status" value="JOINED"/>
    <property type="molecule type" value="Genomic_DNA"/>
</dbReference>
<dbReference type="EMBL" id="AF501884">
    <property type="protein sequence ID" value="AAM15920.1"/>
    <property type="molecule type" value="mRNA"/>
</dbReference>
<dbReference type="EMBL" id="BT009800">
    <property type="protein sequence ID" value="AAP88802.1"/>
    <property type="molecule type" value="mRNA"/>
</dbReference>
<dbReference type="EMBL" id="AY631872">
    <property type="protein sequence ID" value="AAT38116.1"/>
    <property type="molecule type" value="Genomic_DNA"/>
</dbReference>
<dbReference type="EMBL" id="BC000115">
    <property type="protein sequence ID" value="AAH00115.1"/>
    <property type="molecule type" value="mRNA"/>
</dbReference>
<dbReference type="EMBL" id="BC002454">
    <property type="protein sequence ID" value="AAH02454.1"/>
    <property type="molecule type" value="mRNA"/>
</dbReference>
<dbReference type="EMBL" id="BC015920">
    <property type="protein sequence ID" value="AAH15920.1"/>
    <property type="molecule type" value="mRNA"/>
</dbReference>
<dbReference type="CCDS" id="CCDS8564.1">
    <molecule id="P16520-1"/>
</dbReference>
<dbReference type="PIR" id="A35096">
    <property type="entry name" value="RGHUB3"/>
</dbReference>
<dbReference type="RefSeq" id="NP_001284500.1">
    <property type="nucleotide sequence ID" value="NM_001297571.1"/>
</dbReference>
<dbReference type="RefSeq" id="NP_002066.1">
    <molecule id="P16520-1"/>
    <property type="nucleotide sequence ID" value="NM_002075.4"/>
</dbReference>
<dbReference type="RefSeq" id="XP_047284659.1">
    <molecule id="P16520-1"/>
    <property type="nucleotide sequence ID" value="XM_047428703.1"/>
</dbReference>
<dbReference type="SMR" id="P16520"/>
<dbReference type="BioGRID" id="109046">
    <property type="interactions" value="62"/>
</dbReference>
<dbReference type="CORUM" id="P16520"/>
<dbReference type="DIP" id="DIP-601N"/>
<dbReference type="FunCoup" id="P16520">
    <property type="interactions" value="1077"/>
</dbReference>
<dbReference type="IntAct" id="P16520">
    <property type="interactions" value="19"/>
</dbReference>
<dbReference type="MINT" id="P16520"/>
<dbReference type="STRING" id="9606.ENSP00000229264"/>
<dbReference type="iPTMnet" id="P16520"/>
<dbReference type="PhosphoSitePlus" id="P16520"/>
<dbReference type="SwissPalm" id="P16520"/>
<dbReference type="BioMuta" id="GNB3"/>
<dbReference type="DMDM" id="121011"/>
<dbReference type="OGP" id="P16520"/>
<dbReference type="jPOST" id="P16520"/>
<dbReference type="MassIVE" id="P16520"/>
<dbReference type="PaxDb" id="9606-ENSP00000229264"/>
<dbReference type="PeptideAtlas" id="P16520"/>
<dbReference type="ProteomicsDB" id="53379">
    <molecule id="P16520-1"/>
</dbReference>
<dbReference type="Antibodypedia" id="1080">
    <property type="antibodies" value="228 antibodies from 35 providers"/>
</dbReference>
<dbReference type="DNASU" id="2784"/>
<dbReference type="Ensembl" id="ENST00000229264.8">
    <molecule id="P16520-1"/>
    <property type="protein sequence ID" value="ENSP00000229264.3"/>
    <property type="gene ID" value="ENSG00000111664.11"/>
</dbReference>
<dbReference type="GeneID" id="2784"/>
<dbReference type="KEGG" id="hsa:2784"/>
<dbReference type="MANE-Select" id="ENST00000229264.8">
    <property type="protein sequence ID" value="ENSP00000229264.3"/>
    <property type="RefSeq nucleotide sequence ID" value="NM_002075.4"/>
    <property type="RefSeq protein sequence ID" value="NP_002066.1"/>
</dbReference>
<dbReference type="UCSC" id="uc001qrd.3">
    <molecule id="P16520-1"/>
    <property type="organism name" value="human"/>
</dbReference>
<dbReference type="AGR" id="HGNC:4400"/>
<dbReference type="CTD" id="2784"/>
<dbReference type="DisGeNET" id="2784"/>
<dbReference type="GeneCards" id="GNB3"/>
<dbReference type="HGNC" id="HGNC:4400">
    <property type="gene designation" value="GNB3"/>
</dbReference>
<dbReference type="HPA" id="ENSG00000111664">
    <property type="expression patterns" value="Tissue enriched (retina)"/>
</dbReference>
<dbReference type="MalaCards" id="GNB3"/>
<dbReference type="MIM" id="139130">
    <property type="type" value="gene"/>
</dbReference>
<dbReference type="MIM" id="617024">
    <property type="type" value="phenotype"/>
</dbReference>
<dbReference type="neXtProt" id="NX_P16520"/>
<dbReference type="OpenTargets" id="ENSG00000111664"/>
<dbReference type="Orphanet" id="215">
    <property type="disease" value="Congenital stationary night blindness"/>
</dbReference>
<dbReference type="PharmGKB" id="PA176"/>
<dbReference type="VEuPathDB" id="HostDB:ENSG00000111664"/>
<dbReference type="eggNOG" id="KOG0286">
    <property type="taxonomic scope" value="Eukaryota"/>
</dbReference>
<dbReference type="GeneTree" id="ENSGT01000000214413"/>
<dbReference type="InParanoid" id="P16520"/>
<dbReference type="OMA" id="VYSHETI"/>
<dbReference type="OrthoDB" id="10255630at2759"/>
<dbReference type="PAN-GO" id="P16520">
    <property type="GO annotations" value="4 GO annotations based on evolutionary models"/>
</dbReference>
<dbReference type="PhylomeDB" id="P16520"/>
<dbReference type="TreeFam" id="TF106149"/>
<dbReference type="PathwayCommons" id="P16520"/>
<dbReference type="Reactome" id="R-HSA-1296041">
    <property type="pathway name" value="Activation of G protein gated Potassium channels"/>
</dbReference>
<dbReference type="Reactome" id="R-HSA-163359">
    <property type="pathway name" value="Glucagon signaling in metabolic regulation"/>
</dbReference>
<dbReference type="Reactome" id="R-HSA-202040">
    <property type="pathway name" value="G-protein activation"/>
</dbReference>
<dbReference type="Reactome" id="R-HSA-381676">
    <property type="pathway name" value="Glucagon-like Peptide-1 (GLP1) regulates insulin secretion"/>
</dbReference>
<dbReference type="Reactome" id="R-HSA-381771">
    <property type="pathway name" value="Synthesis, secretion, and inactivation of Glucagon-like Peptide-1 (GLP-1)"/>
</dbReference>
<dbReference type="Reactome" id="R-HSA-392170">
    <property type="pathway name" value="ADP signalling through P2Y purinoceptor 12"/>
</dbReference>
<dbReference type="Reactome" id="R-HSA-392451">
    <property type="pathway name" value="G beta:gamma signalling through PI3Kgamma"/>
</dbReference>
<dbReference type="Reactome" id="R-HSA-392851">
    <property type="pathway name" value="Prostacyclin signalling through prostacyclin receptor"/>
</dbReference>
<dbReference type="Reactome" id="R-HSA-400042">
    <property type="pathway name" value="Adrenaline,noradrenaline inhibits insulin secretion"/>
</dbReference>
<dbReference type="Reactome" id="R-HSA-4086398">
    <property type="pathway name" value="Ca2+ pathway"/>
</dbReference>
<dbReference type="Reactome" id="R-HSA-416476">
    <property type="pathway name" value="G alpha (q) signalling events"/>
</dbReference>
<dbReference type="Reactome" id="R-HSA-416482">
    <property type="pathway name" value="G alpha (12/13) signalling events"/>
</dbReference>
<dbReference type="Reactome" id="R-HSA-418217">
    <property type="pathway name" value="G beta:gamma signalling through PLC beta"/>
</dbReference>
<dbReference type="Reactome" id="R-HSA-418555">
    <property type="pathway name" value="G alpha (s) signalling events"/>
</dbReference>
<dbReference type="Reactome" id="R-HSA-418592">
    <property type="pathway name" value="ADP signalling through P2Y purinoceptor 1"/>
</dbReference>
<dbReference type="Reactome" id="R-HSA-418594">
    <property type="pathway name" value="G alpha (i) signalling events"/>
</dbReference>
<dbReference type="Reactome" id="R-HSA-418597">
    <property type="pathway name" value="G alpha (z) signalling events"/>
</dbReference>
<dbReference type="Reactome" id="R-HSA-420092">
    <property type="pathway name" value="Glucagon-type ligand receptors"/>
</dbReference>
<dbReference type="Reactome" id="R-HSA-428930">
    <property type="pathway name" value="Thromboxane signalling through TP receptor"/>
</dbReference>
<dbReference type="Reactome" id="R-HSA-432040">
    <property type="pathway name" value="Vasopressin regulates renal water homeostasis via Aquaporins"/>
</dbReference>
<dbReference type="Reactome" id="R-HSA-456926">
    <property type="pathway name" value="Thrombin signalling through proteinase activated receptors (PARs)"/>
</dbReference>
<dbReference type="Reactome" id="R-HSA-500657">
    <property type="pathway name" value="Presynaptic function of Kainate receptors"/>
</dbReference>
<dbReference type="Reactome" id="R-HSA-6814122">
    <property type="pathway name" value="Cooperation of PDCL (PhLP1) and TRiC/CCT in G-protein beta folding"/>
</dbReference>
<dbReference type="Reactome" id="R-HSA-8964315">
    <property type="pathway name" value="G beta:gamma signalling through BTK"/>
</dbReference>
<dbReference type="Reactome" id="R-HSA-8964616">
    <property type="pathway name" value="G beta:gamma signalling through CDC42"/>
</dbReference>
<dbReference type="Reactome" id="R-HSA-9009391">
    <property type="pathway name" value="Extra-nuclear estrogen signaling"/>
</dbReference>
<dbReference type="Reactome" id="R-HSA-9634597">
    <property type="pathway name" value="GPER1 signaling"/>
</dbReference>
<dbReference type="Reactome" id="R-HSA-9660821">
    <property type="pathway name" value="ADORA2B mediated anti-inflammatory cytokines production"/>
</dbReference>
<dbReference type="Reactome" id="R-HSA-9717207">
    <property type="pathway name" value="Sensory perception of sweet, bitter, and umami (glutamate) taste"/>
</dbReference>
<dbReference type="Reactome" id="R-HSA-9856530">
    <property type="pathway name" value="High laminar flow shear stress activates signaling by PIEZO1 and PECAM1:CDH5:KDR in endothelial cells"/>
</dbReference>
<dbReference type="Reactome" id="R-HSA-997272">
    <property type="pathway name" value="Inhibition of voltage gated Ca2+ channels via Gbeta/gamma subunits"/>
</dbReference>
<dbReference type="SignaLink" id="P16520"/>
<dbReference type="SIGNOR" id="P16520"/>
<dbReference type="BioGRID-ORCS" id="2784">
    <property type="hits" value="18 hits in 1153 CRISPR screens"/>
</dbReference>
<dbReference type="ChiTaRS" id="GNB3">
    <property type="organism name" value="human"/>
</dbReference>
<dbReference type="GeneWiki" id="GNB3"/>
<dbReference type="GenomeRNAi" id="2784"/>
<dbReference type="Pharos" id="P16520">
    <property type="development level" value="Tbio"/>
</dbReference>
<dbReference type="PRO" id="PR:P16520"/>
<dbReference type="Proteomes" id="UP000005640">
    <property type="component" value="Chromosome 12"/>
</dbReference>
<dbReference type="RNAct" id="P16520">
    <property type="molecule type" value="protein"/>
</dbReference>
<dbReference type="Bgee" id="ENSG00000111664">
    <property type="expression patterns" value="Expressed in adenohypophysis and 119 other cell types or tissues"/>
</dbReference>
<dbReference type="ExpressionAtlas" id="P16520">
    <property type="expression patterns" value="baseline and differential"/>
</dbReference>
<dbReference type="GO" id="GO:0044297">
    <property type="term" value="C:cell body"/>
    <property type="evidence" value="ECO:0007669"/>
    <property type="project" value="Ensembl"/>
</dbReference>
<dbReference type="GO" id="GO:0005737">
    <property type="term" value="C:cytoplasm"/>
    <property type="evidence" value="ECO:0000318"/>
    <property type="project" value="GO_Central"/>
</dbReference>
<dbReference type="GO" id="GO:0005829">
    <property type="term" value="C:cytosol"/>
    <property type="evidence" value="ECO:0000304"/>
    <property type="project" value="Reactome"/>
</dbReference>
<dbReference type="GO" id="GO:0030425">
    <property type="term" value="C:dendrite"/>
    <property type="evidence" value="ECO:0007669"/>
    <property type="project" value="Ensembl"/>
</dbReference>
<dbReference type="GO" id="GO:0070062">
    <property type="term" value="C:extracellular exosome"/>
    <property type="evidence" value="ECO:0007005"/>
    <property type="project" value="UniProtKB"/>
</dbReference>
<dbReference type="GO" id="GO:0005834">
    <property type="term" value="C:heterotrimeric G-protein complex"/>
    <property type="evidence" value="ECO:0000318"/>
    <property type="project" value="GO_Central"/>
</dbReference>
<dbReference type="GO" id="GO:0005886">
    <property type="term" value="C:plasma membrane"/>
    <property type="evidence" value="ECO:0000304"/>
    <property type="project" value="Reactome"/>
</dbReference>
<dbReference type="GO" id="GO:0003924">
    <property type="term" value="F:GTPase activity"/>
    <property type="evidence" value="ECO:0000304"/>
    <property type="project" value="ProtInc"/>
</dbReference>
<dbReference type="GO" id="GO:0051020">
    <property type="term" value="F:GTPase binding"/>
    <property type="evidence" value="ECO:0000353"/>
    <property type="project" value="UniProtKB"/>
</dbReference>
<dbReference type="GO" id="GO:0030159">
    <property type="term" value="F:signaling receptor complex adaptor activity"/>
    <property type="evidence" value="ECO:0000318"/>
    <property type="project" value="GO_Central"/>
</dbReference>
<dbReference type="GO" id="GO:0030507">
    <property type="term" value="F:spectrin binding"/>
    <property type="evidence" value="ECO:0007669"/>
    <property type="project" value="Ensembl"/>
</dbReference>
<dbReference type="GO" id="GO:0006884">
    <property type="term" value="P:cell volume homeostasis"/>
    <property type="evidence" value="ECO:0000316"/>
    <property type="project" value="ARUK-UCL"/>
</dbReference>
<dbReference type="GO" id="GO:0007186">
    <property type="term" value="P:G protein-coupled receptor signaling pathway"/>
    <property type="evidence" value="ECO:0000318"/>
    <property type="project" value="GO_Central"/>
</dbReference>
<dbReference type="GO" id="GO:0008217">
    <property type="term" value="P:regulation of blood pressure"/>
    <property type="evidence" value="ECO:0000304"/>
    <property type="project" value="ProtInc"/>
</dbReference>
<dbReference type="GO" id="GO:0090181">
    <property type="term" value="P:regulation of cholesterol metabolic process"/>
    <property type="evidence" value="ECO:0000316"/>
    <property type="project" value="ARUK-UCL"/>
</dbReference>
<dbReference type="GO" id="GO:0045598">
    <property type="term" value="P:regulation of fat cell differentiation"/>
    <property type="evidence" value="ECO:0000316"/>
    <property type="project" value="ARUK-UCL"/>
</dbReference>
<dbReference type="GO" id="GO:0010468">
    <property type="term" value="P:regulation of gene expression"/>
    <property type="evidence" value="ECO:0000316"/>
    <property type="project" value="ARUK-UCL"/>
</dbReference>
<dbReference type="GO" id="GO:0010906">
    <property type="term" value="P:regulation of glucose metabolic process"/>
    <property type="evidence" value="ECO:0000316"/>
    <property type="project" value="ARUK-UCL"/>
</dbReference>
<dbReference type="GO" id="GO:0032350">
    <property type="term" value="P:regulation of hormone metabolic process"/>
    <property type="evidence" value="ECO:0000316"/>
    <property type="project" value="ARUK-UCL"/>
</dbReference>
<dbReference type="GO" id="GO:1903725">
    <property type="term" value="P:regulation of phospholipid metabolic process"/>
    <property type="evidence" value="ECO:0000316"/>
    <property type="project" value="ARUK-UCL"/>
</dbReference>
<dbReference type="GO" id="GO:0090207">
    <property type="term" value="P:regulation of triglyceride metabolic process"/>
    <property type="evidence" value="ECO:0000316"/>
    <property type="project" value="ARUK-UCL"/>
</dbReference>
<dbReference type="CDD" id="cd00200">
    <property type="entry name" value="WD40"/>
    <property type="match status" value="1"/>
</dbReference>
<dbReference type="FunFam" id="2.130.10.10:FF:000007">
    <property type="entry name" value="Guanine nucleotide-binding protein G(I)/G(S)/G(T) subunit beta-1"/>
    <property type="match status" value="1"/>
</dbReference>
<dbReference type="Gene3D" id="2.130.10.10">
    <property type="entry name" value="YVTN repeat-like/Quinoprotein amine dehydrogenase"/>
    <property type="match status" value="1"/>
</dbReference>
<dbReference type="InterPro" id="IPR020472">
    <property type="entry name" value="G-protein_beta_WD-40_rep"/>
</dbReference>
<dbReference type="InterPro" id="IPR001632">
    <property type="entry name" value="Gprotein_B"/>
</dbReference>
<dbReference type="InterPro" id="IPR016346">
    <property type="entry name" value="Guanine_nucleotide-bd_bsu"/>
</dbReference>
<dbReference type="InterPro" id="IPR015943">
    <property type="entry name" value="WD40/YVTN_repeat-like_dom_sf"/>
</dbReference>
<dbReference type="InterPro" id="IPR019775">
    <property type="entry name" value="WD40_repeat_CS"/>
</dbReference>
<dbReference type="InterPro" id="IPR036322">
    <property type="entry name" value="WD40_repeat_dom_sf"/>
</dbReference>
<dbReference type="InterPro" id="IPR001680">
    <property type="entry name" value="WD40_rpt"/>
</dbReference>
<dbReference type="PANTHER" id="PTHR19850">
    <property type="entry name" value="GUANINE NUCLEOTIDE-BINDING PROTEIN BETA G PROTEIN BETA"/>
    <property type="match status" value="1"/>
</dbReference>
<dbReference type="Pfam" id="PF25391">
    <property type="entry name" value="WD40_Gbeta"/>
    <property type="match status" value="1"/>
</dbReference>
<dbReference type="PIRSF" id="PIRSF002394">
    <property type="entry name" value="GN-bd_beta"/>
    <property type="match status" value="1"/>
</dbReference>
<dbReference type="PRINTS" id="PR00319">
    <property type="entry name" value="GPROTEINB"/>
</dbReference>
<dbReference type="PRINTS" id="PR00320">
    <property type="entry name" value="GPROTEINBRPT"/>
</dbReference>
<dbReference type="SMART" id="SM00320">
    <property type="entry name" value="WD40"/>
    <property type="match status" value="7"/>
</dbReference>
<dbReference type="SUPFAM" id="SSF50978">
    <property type="entry name" value="WD40 repeat-like"/>
    <property type="match status" value="1"/>
</dbReference>
<dbReference type="PROSITE" id="PS00678">
    <property type="entry name" value="WD_REPEATS_1"/>
    <property type="match status" value="3"/>
</dbReference>
<dbReference type="PROSITE" id="PS50082">
    <property type="entry name" value="WD_REPEATS_2"/>
    <property type="match status" value="5"/>
</dbReference>
<dbReference type="PROSITE" id="PS50294">
    <property type="entry name" value="WD_REPEATS_REGION"/>
    <property type="match status" value="1"/>
</dbReference>
<reference key="1">
    <citation type="journal article" date="1990" name="Proc. Natl. Acad. Sci. U.S.A.">
        <title>Molecular cloning of beta 3 subunit, a third form of the G protein beta-subunit polypeptide.</title>
        <authorList>
            <person name="Levine M.A."/>
            <person name="Smallwood P.M."/>
            <person name="Moen P.T. Jr."/>
            <person name="Helman L.J."/>
            <person name="Ahn T.G."/>
        </authorList>
    </citation>
    <scope>NUCLEOTIDE SEQUENCE [MRNA] (ISOFORM 1)</scope>
</reference>
<reference key="2">
    <citation type="journal article" date="1996" name="Genome Res.">
        <title>A gene-rich cluster between the CD4 and triosephosphate isomerase genes at human chromosome 12p13.</title>
        <authorList>
            <person name="Ansari-Lari M.A."/>
            <person name="Muzny D.M."/>
            <person name="Lu J."/>
            <person name="Lu F."/>
            <person name="Lilley C.E."/>
            <person name="Spanos S."/>
            <person name="Malley T."/>
            <person name="Gibbs R.A."/>
        </authorList>
    </citation>
    <scope>NUCLEOTIDE SEQUENCE [GENOMIC DNA / MRNA] (ISOFORM 1)</scope>
</reference>
<reference key="3">
    <citation type="journal article" date="1997" name="Genome Res.">
        <title>Large-scale sequencing in human chromosome 12p13: experimental and computational gene structure determination.</title>
        <authorList>
            <person name="Ansari-Lari M.A."/>
            <person name="Shen Y."/>
            <person name="Muzny D.M."/>
            <person name="Lee W."/>
            <person name="Gibbs R.A."/>
        </authorList>
    </citation>
    <scope>NUCLEOTIDE SEQUENCE [GENOMIC DNA]</scope>
    <source>
        <tissue>Brain</tissue>
    </source>
</reference>
<reference key="4">
    <citation type="journal article" date="2000" name="Hypertension">
        <title>G protein beta 3 gene: structure, promoter, and additional polymorphisms.</title>
        <authorList>
            <person name="Rosskopf D."/>
            <person name="Busch S."/>
            <person name="Manthey I."/>
            <person name="Siffert W."/>
        </authorList>
    </citation>
    <scope>NUCLEOTIDE SEQUENCE [GENOMIC DNA]</scope>
</reference>
<reference key="5">
    <citation type="submission" date="2002-03" db="EMBL/GenBank/DDBJ databases">
        <title>cDNA clones of human proteins involved in signal transduction sequenced by the Guthrie cDNA resource center (www.cdna.org).</title>
        <authorList>
            <person name="Puhl H.L. III"/>
            <person name="Ikeda S.R."/>
            <person name="Aronstam R.S."/>
        </authorList>
    </citation>
    <scope>NUCLEOTIDE SEQUENCE [LARGE SCALE MRNA] (ISOFORM 1)</scope>
    <source>
        <tissue>Brain</tissue>
    </source>
</reference>
<reference key="6">
    <citation type="submission" date="2003-05" db="EMBL/GenBank/DDBJ databases">
        <title>Cloning of human full-length CDSs in BD Creator(TM) system donor vector.</title>
        <authorList>
            <person name="Kalnine N."/>
            <person name="Chen X."/>
            <person name="Rolfs A."/>
            <person name="Halleck A."/>
            <person name="Hines L."/>
            <person name="Eisenstein S."/>
            <person name="Koundinya M."/>
            <person name="Raphael J."/>
            <person name="Moreira D."/>
            <person name="Kelley T."/>
            <person name="LaBaer J."/>
            <person name="Lin Y."/>
            <person name="Phelan M."/>
            <person name="Farmer A."/>
        </authorList>
    </citation>
    <scope>NUCLEOTIDE SEQUENCE [LARGE SCALE MRNA] (ISOFORM 1)</scope>
    <scope>VARIANT SER-272</scope>
</reference>
<reference key="7">
    <citation type="submission" date="2004-05" db="EMBL/GenBank/DDBJ databases">
        <authorList>
            <consortium name="SeattleSNPs variation discovery resource"/>
        </authorList>
    </citation>
    <scope>NUCLEOTIDE SEQUENCE [GENOMIC DNA]</scope>
</reference>
<reference key="8">
    <citation type="journal article" date="2004" name="Genome Res.">
        <title>The status, quality, and expansion of the NIH full-length cDNA project: the Mammalian Gene Collection (MGC).</title>
        <authorList>
            <consortium name="The MGC Project Team"/>
        </authorList>
    </citation>
    <scope>NUCLEOTIDE SEQUENCE [LARGE SCALE MRNA] (ISOFORMS 1 AND 2)</scope>
    <scope>VARIANT SER-272</scope>
    <source>
        <tissue>Eye</tissue>
    </source>
</reference>
<reference key="9">
    <citation type="submission" date="2008-03" db="UniProtKB">
        <authorList>
            <person name="Bienvenut W.V."/>
            <person name="Heiserich L."/>
            <person name="Gottlieb E."/>
        </authorList>
    </citation>
    <scope>PROTEIN SEQUENCE OF 69-78 AND 90-96</scope>
    <scope>IDENTIFICATION BY MASS SPECTROMETRY</scope>
    <source>
        <tissue>Colon carcinoma</tissue>
    </source>
</reference>
<reference key="10">
    <citation type="journal article" date="2009" name="Cell. Physiol. Biochem.">
        <title>The cationic region of Rhes mediates its interactions with specific Gbeta subunits.</title>
        <authorList>
            <person name="Hill C."/>
            <person name="Goddard A."/>
            <person name="Ladds G."/>
            <person name="Davey J."/>
        </authorList>
    </citation>
    <scope>INTERACTION WITH RASD2</scope>
</reference>
<reference key="11">
    <citation type="journal article" date="2016" name="Am. J. Hum. Genet.">
        <title>Biallelic mutations in GNB3 cause a unique form of autosomal-recessive congenital stationary night blindness.</title>
        <authorList>
            <consortium name="GNB3 Consortium"/>
            <person name="Vincent A."/>
            <person name="Audo I."/>
            <person name="Tavares E."/>
            <person name="Maynes J.T."/>
            <person name="Tumber A."/>
            <person name="Wright T."/>
            <person name="Li S."/>
            <person name="Michiels C."/>
            <person name="Condroyer C."/>
            <person name="MacDonald H."/>
            <person name="Verdet R."/>
            <person name="Sahel J.A."/>
            <person name="Hamel C.P."/>
            <person name="Zeitz C."/>
            <person name="Heon E."/>
        </authorList>
    </citation>
    <scope>INVOLVEMENT IN CSNB1H</scope>
    <scope>VARIANTS CSNB1H LYS-57 DEL AND PHE-67</scope>
</reference>
<keyword id="KW-0025">Alternative splicing</keyword>
<keyword id="KW-1014">Congenital stationary night blindness</keyword>
<keyword id="KW-0903">Direct protein sequencing</keyword>
<keyword id="KW-0225">Disease variant</keyword>
<keyword id="KW-1267">Proteomics identification</keyword>
<keyword id="KW-1185">Reference proteome</keyword>
<keyword id="KW-0677">Repeat</keyword>
<keyword id="KW-0807">Transducer</keyword>
<keyword id="KW-0853">WD repeat</keyword>
<feature type="chain" id="PRO_0000127699" description="Guanine nucleotide-binding protein G(I)/G(S)/G(T) subunit beta-3">
    <location>
        <begin position="1"/>
        <end position="340"/>
    </location>
</feature>
<feature type="repeat" description="WD 1">
    <location>
        <begin position="53"/>
        <end position="83"/>
    </location>
</feature>
<feature type="repeat" description="WD 2">
    <location>
        <begin position="95"/>
        <end position="125"/>
    </location>
</feature>
<feature type="repeat" description="WD 3">
    <location>
        <begin position="141"/>
        <end position="170"/>
    </location>
</feature>
<feature type="repeat" description="WD 4">
    <location>
        <begin position="182"/>
        <end position="212"/>
    </location>
</feature>
<feature type="repeat" description="WD 5">
    <location>
        <begin position="224"/>
        <end position="254"/>
    </location>
</feature>
<feature type="repeat" description="WD 6">
    <location>
        <begin position="268"/>
        <end position="298"/>
    </location>
</feature>
<feature type="repeat" description="WD 7">
    <location>
        <begin position="310"/>
        <end position="340"/>
    </location>
</feature>
<feature type="splice variant" id="VSP_055233" description="In isoform 2." evidence="5">
    <location>
        <begin position="236"/>
        <end position="278"/>
    </location>
</feature>
<feature type="sequence variant" id="VAR_049268" description="In dbSNP:rs45569331.">
    <original>V</original>
    <variation>M</variation>
    <location>
        <position position="40"/>
    </location>
</feature>
<feature type="sequence variant" id="VAR_077012" description="In CSNB1H; dbSNP:rs879253774." evidence="3">
    <location>
        <position position="57"/>
    </location>
</feature>
<feature type="sequence variant" id="VAR_077013" description="In CSNB1H; uncertain significance; dbSNP:rs140263599." evidence="3">
    <original>S</original>
    <variation>F</variation>
    <location>
        <position position="67"/>
    </location>
</feature>
<feature type="sequence variant" id="VAR_014756" description="In dbSNP:rs2234756.">
    <original>D</original>
    <variation>N</variation>
    <location>
        <position position="76"/>
    </location>
</feature>
<feature type="sequence variant" id="VAR_049269" description="In dbSNP:rs45616032.">
    <original>V</original>
    <variation>M</variation>
    <location>
        <position position="81"/>
    </location>
</feature>
<feature type="sequence variant" id="VAR_014757" description="In dbSNP:rs5442." evidence="1 4">
    <original>G</original>
    <variation>S</variation>
    <location>
        <position position="272"/>
    </location>
</feature>
<feature type="sequence variant" id="VAR_029304" description="In dbSNP:rs28395776.">
    <original>L</original>
    <variation>F</variation>
    <location>
        <position position="280"/>
    </location>
</feature>
<feature type="sequence variant" id="VAR_029305" description="In dbSNP:rs28395775.">
    <original>G</original>
    <variation>E</variation>
    <location>
        <position position="324"/>
    </location>
</feature>
<feature type="sequence variant" id="VAR_014758" description="In dbSNP:rs5444.">
    <original>W</original>
    <variation>L</variation>
    <location>
        <position position="339"/>
    </location>
</feature>
<organism>
    <name type="scientific">Homo sapiens</name>
    <name type="common">Human</name>
    <dbReference type="NCBI Taxonomy" id="9606"/>
    <lineage>
        <taxon>Eukaryota</taxon>
        <taxon>Metazoa</taxon>
        <taxon>Chordata</taxon>
        <taxon>Craniata</taxon>
        <taxon>Vertebrata</taxon>
        <taxon>Euteleostomi</taxon>
        <taxon>Mammalia</taxon>
        <taxon>Eutheria</taxon>
        <taxon>Euarchontoglires</taxon>
        <taxon>Primates</taxon>
        <taxon>Haplorrhini</taxon>
        <taxon>Catarrhini</taxon>
        <taxon>Hominidae</taxon>
        <taxon>Homo</taxon>
    </lineage>
</organism>
<comment type="function">
    <text>Guanine nucleotide-binding proteins (G proteins) are involved as a modulator or transducer in various transmembrane signaling systems. The beta and gamma chains are required for the GTPase activity, for replacement of GDP by GTP, and for G protein-effector interaction.</text>
</comment>
<comment type="subunit">
    <text evidence="2">G proteins are composed of 3 units, alpha, beta and gamma. Interacts with RASD2.</text>
</comment>
<comment type="interaction">
    <interactant intactId="EBI-2880663">
        <id>P16520</id>
    </interactant>
    <interactant intactId="EBI-2835269">
        <id>P32302</id>
        <label>CXCR5</label>
    </interactant>
    <organismsDiffer>false</organismsDiffer>
    <experiments>3</experiments>
</comment>
<comment type="interaction">
    <interactant intactId="EBI-17871073">
        <id>P16520-2</id>
    </interactant>
    <interactant intactId="EBI-7062247">
        <id>Q9UHD4</id>
        <label>CIDEB</label>
    </interactant>
    <organismsDiffer>false</organismsDiffer>
    <experiments>3</experiments>
</comment>
<comment type="alternative products">
    <event type="alternative splicing"/>
    <isoform>
        <id>P16520-1</id>
        <name>1</name>
        <sequence type="displayed"/>
    </isoform>
    <isoform>
        <id>P16520-2</id>
        <name>2</name>
        <sequence type="described" ref="VSP_055233"/>
    </isoform>
</comment>
<comment type="disease" evidence="3">
    <disease id="DI-04757">
        <name>Night blindness, congenital stationary, 1H</name>
        <acronym>CSNB1H</acronym>
        <description>A form of congenital stationary night blindness, a non-progressive retinal disorder characterized by impaired night vision or in dim light, with good vision only on bright days. CSNB1H patients present with childhood-onset night blindness and middle age-onset photophobia, but have near-normal vision and do not exhibit nystagmus or high myopia. CSNB1H inheritance is autosomal recessive.</description>
        <dbReference type="MIM" id="617024"/>
    </disease>
    <text>The disease is caused by variants affecting the gene represented in this entry.</text>
</comment>
<comment type="similarity">
    <text evidence="6">Belongs to the WD repeat G protein beta family.</text>
</comment>
<gene>
    <name type="primary">GNB3</name>
</gene>
<protein>
    <recommendedName>
        <fullName>Guanine nucleotide-binding protein G(I)/G(S)/G(T) subunit beta-3</fullName>
    </recommendedName>
    <alternativeName>
        <fullName>Transducin beta chain 3</fullName>
    </alternativeName>
</protein>
<accession>P16520</accession>
<accession>Q96B71</accession>
<accession>Q9BQC0</accession>
<evidence type="ECO:0000269" key="1">
    <source>
    </source>
</evidence>
<evidence type="ECO:0000269" key="2">
    <source>
    </source>
</evidence>
<evidence type="ECO:0000269" key="3">
    <source>
    </source>
</evidence>
<evidence type="ECO:0000269" key="4">
    <source ref="6"/>
</evidence>
<evidence type="ECO:0000303" key="5">
    <source>
    </source>
</evidence>
<evidence type="ECO:0000305" key="6"/>
<name>GBB3_HUMAN</name>
<sequence>MGEMEQLRQEAEQLKKQIADARKACADVTLAELVSGLEVVGRVQMRTRRTLRGHLAKIYAMHWATDSKLLVSASQDGKLIVWDSYTTNKVHAIPLRSSWVMTCAYAPSGNFVACGGLDNMCSIYNLKSREGNVKVSRELSAHTGYLSCCRFLDDNNIVTSSGDTTCALWDIETGQQKTVFVGHTGDCMSLAVSPDFNLFISGACDASAKLWDVREGTCRQTFTGHESDINAICFFPNGEAICTGSDDASCRLFDLRADQELICFSHESIICGITSVAFSLSGRLLFAGYDDFNCNVWDSMKSERVGILSGHDNRVSCLGVTADGMAVATGSWDSFLKIWN</sequence>
<proteinExistence type="evidence at protein level"/>